<feature type="chain" id="PRO_0000391229" description="NADH-quinone oxidoreductase subunit N 1">
    <location>
        <begin position="1"/>
        <end position="471"/>
    </location>
</feature>
<feature type="transmembrane region" description="Helical" evidence="1">
    <location>
        <begin position="11"/>
        <end position="31"/>
    </location>
</feature>
<feature type="transmembrane region" description="Helical" evidence="1">
    <location>
        <begin position="39"/>
        <end position="59"/>
    </location>
</feature>
<feature type="transmembrane region" description="Helical" evidence="1">
    <location>
        <begin position="81"/>
        <end position="101"/>
    </location>
</feature>
<feature type="transmembrane region" description="Helical" evidence="1">
    <location>
        <begin position="105"/>
        <end position="125"/>
    </location>
</feature>
<feature type="transmembrane region" description="Helical" evidence="1">
    <location>
        <begin position="127"/>
        <end position="147"/>
    </location>
</feature>
<feature type="transmembrane region" description="Helical" evidence="1">
    <location>
        <begin position="162"/>
        <end position="182"/>
    </location>
</feature>
<feature type="transmembrane region" description="Helical" evidence="1">
    <location>
        <begin position="200"/>
        <end position="220"/>
    </location>
</feature>
<feature type="transmembrane region" description="Helical" evidence="1">
    <location>
        <begin position="234"/>
        <end position="254"/>
    </location>
</feature>
<feature type="transmembrane region" description="Helical" evidence="1">
    <location>
        <begin position="270"/>
        <end position="290"/>
    </location>
</feature>
<feature type="transmembrane region" description="Helical" evidence="1">
    <location>
        <begin position="296"/>
        <end position="316"/>
    </location>
</feature>
<feature type="transmembrane region" description="Helical" evidence="1">
    <location>
        <begin position="324"/>
        <end position="344"/>
    </location>
</feature>
<feature type="transmembrane region" description="Helical" evidence="1">
    <location>
        <begin position="365"/>
        <end position="385"/>
    </location>
</feature>
<feature type="transmembrane region" description="Helical" evidence="1">
    <location>
        <begin position="398"/>
        <end position="418"/>
    </location>
</feature>
<feature type="transmembrane region" description="Helical" evidence="1">
    <location>
        <begin position="444"/>
        <end position="464"/>
    </location>
</feature>
<reference key="1">
    <citation type="journal article" date="2008" name="J. Bacteriol.">
        <title>Genome sequence of the streptomycin-producing microorganism Streptomyces griseus IFO 13350.</title>
        <authorList>
            <person name="Ohnishi Y."/>
            <person name="Ishikawa J."/>
            <person name="Hara H."/>
            <person name="Suzuki H."/>
            <person name="Ikenoya M."/>
            <person name="Ikeda H."/>
            <person name="Yamashita A."/>
            <person name="Hattori M."/>
            <person name="Horinouchi S."/>
        </authorList>
    </citation>
    <scope>NUCLEOTIDE SEQUENCE [LARGE SCALE GENOMIC DNA]</scope>
    <source>
        <strain>JCM 4626 / CBS 651.72 / NBRC 13350 / KCC S-0626 / ISP 5235</strain>
    </source>
</reference>
<name>NUON1_STRGG</name>
<proteinExistence type="inferred from homology"/>
<protein>
    <recommendedName>
        <fullName evidence="1">NADH-quinone oxidoreductase subunit N 1</fullName>
        <ecNumber evidence="1">7.1.1.-</ecNumber>
    </recommendedName>
    <alternativeName>
        <fullName evidence="1">NADH dehydrogenase I subunit N 1</fullName>
    </alternativeName>
    <alternativeName>
        <fullName evidence="1">NDH-1 subunit N 1</fullName>
    </alternativeName>
</protein>
<comment type="function">
    <text evidence="1">NDH-1 shuttles electrons from NADH, via FMN and iron-sulfur (Fe-S) centers, to quinones in the respiratory chain. The immediate electron acceptor for the enzyme in this species is believed to be a menaquinone. Couples the redox reaction to proton translocation (for every two electrons transferred, four hydrogen ions are translocated across the cytoplasmic membrane), and thus conserves the redox energy in a proton gradient.</text>
</comment>
<comment type="catalytic activity">
    <reaction evidence="1">
        <text>a quinone + NADH + 5 H(+)(in) = a quinol + NAD(+) + 4 H(+)(out)</text>
        <dbReference type="Rhea" id="RHEA:57888"/>
        <dbReference type="ChEBI" id="CHEBI:15378"/>
        <dbReference type="ChEBI" id="CHEBI:24646"/>
        <dbReference type="ChEBI" id="CHEBI:57540"/>
        <dbReference type="ChEBI" id="CHEBI:57945"/>
        <dbReference type="ChEBI" id="CHEBI:132124"/>
    </reaction>
</comment>
<comment type="subunit">
    <text evidence="1">NDH-1 is composed of 14 different subunits. Subunits NuoA, H, J, K, L, M, N constitute the membrane sector of the complex.</text>
</comment>
<comment type="subcellular location">
    <subcellularLocation>
        <location evidence="1">Cell membrane</location>
        <topology evidence="1">Multi-pass membrane protein</topology>
    </subcellularLocation>
</comment>
<comment type="similarity">
    <text evidence="1">Belongs to the complex I subunit 2 family.</text>
</comment>
<keyword id="KW-1003">Cell membrane</keyword>
<keyword id="KW-0472">Membrane</keyword>
<keyword id="KW-0520">NAD</keyword>
<keyword id="KW-0874">Quinone</keyword>
<keyword id="KW-1278">Translocase</keyword>
<keyword id="KW-0812">Transmembrane</keyword>
<keyword id="KW-1133">Transmembrane helix</keyword>
<keyword id="KW-0813">Transport</keyword>
<accession>B1VSR0</accession>
<evidence type="ECO:0000255" key="1">
    <source>
        <dbReference type="HAMAP-Rule" id="MF_00445"/>
    </source>
</evidence>
<gene>
    <name evidence="1" type="primary">nuoN1</name>
    <name type="ordered locus">SGR_785</name>
</gene>
<sequence length="471" mass="48206">MGMSVNSDPAALVPEITLLVSAVTGLLAGAWTPRERQGTIHVLAALATVVGLVATALAARQPDETVFGTYVLDTATHTTRAIVLVAVLALIALSRDTVAGHKRETEFVVLLQLGALGSIALAGAGDLIMLFAAFLLASVPFYALAGWAKQGRATEAALKYYLAGALAGVTTAAGVTILFGVAGATDYEKVADGISRGPAAAAAVGLIAVLAGLAFKAGAVPAHFWVPDIAEGTPPPVAAALTTVPKIGALVAFYRLLDTAIPAAAIDWRLITAVLATAGMTLGNLAAFAQTSALRMLGYSTVSQVGYLLMAVAVAGRTPLAQPALLLYLAAYALTNIAGFAVVATTHEHRIDRYRGLFHRDPLLALALTVALLGLVGTPPTAVFVGKLEIFTAAMDGGLAWLVVIAALNTLASLFYYLRWITPAFRPAEDDSAAVTPPSRWARAVALTTAALTLLLGIGSGIVLNALGASG</sequence>
<organism>
    <name type="scientific">Streptomyces griseus subsp. griseus (strain JCM 4626 / CBS 651.72 / NBRC 13350 / KCC S-0626 / ISP 5235)</name>
    <dbReference type="NCBI Taxonomy" id="455632"/>
    <lineage>
        <taxon>Bacteria</taxon>
        <taxon>Bacillati</taxon>
        <taxon>Actinomycetota</taxon>
        <taxon>Actinomycetes</taxon>
        <taxon>Kitasatosporales</taxon>
        <taxon>Streptomycetaceae</taxon>
        <taxon>Streptomyces</taxon>
    </lineage>
</organism>
<dbReference type="EC" id="7.1.1.-" evidence="1"/>
<dbReference type="EMBL" id="AP009493">
    <property type="protein sequence ID" value="BAG17614.1"/>
    <property type="molecule type" value="Genomic_DNA"/>
</dbReference>
<dbReference type="RefSeq" id="WP_012378067.1">
    <property type="nucleotide sequence ID" value="NC_010572.1"/>
</dbReference>
<dbReference type="SMR" id="B1VSR0"/>
<dbReference type="KEGG" id="sgr:SGR_785"/>
<dbReference type="PATRIC" id="fig|455632.4.peg.773"/>
<dbReference type="eggNOG" id="COG1007">
    <property type="taxonomic scope" value="Bacteria"/>
</dbReference>
<dbReference type="HOGENOM" id="CLU_007100_1_3_11"/>
<dbReference type="Proteomes" id="UP000001685">
    <property type="component" value="Chromosome"/>
</dbReference>
<dbReference type="GO" id="GO:0005886">
    <property type="term" value="C:plasma membrane"/>
    <property type="evidence" value="ECO:0007669"/>
    <property type="project" value="UniProtKB-SubCell"/>
</dbReference>
<dbReference type="GO" id="GO:0008137">
    <property type="term" value="F:NADH dehydrogenase (ubiquinone) activity"/>
    <property type="evidence" value="ECO:0007669"/>
    <property type="project" value="InterPro"/>
</dbReference>
<dbReference type="GO" id="GO:0050136">
    <property type="term" value="F:NADH:ubiquinone reductase (non-electrogenic) activity"/>
    <property type="evidence" value="ECO:0007669"/>
    <property type="project" value="UniProtKB-UniRule"/>
</dbReference>
<dbReference type="GO" id="GO:0048038">
    <property type="term" value="F:quinone binding"/>
    <property type="evidence" value="ECO:0007669"/>
    <property type="project" value="UniProtKB-KW"/>
</dbReference>
<dbReference type="GO" id="GO:0042773">
    <property type="term" value="P:ATP synthesis coupled electron transport"/>
    <property type="evidence" value="ECO:0007669"/>
    <property type="project" value="InterPro"/>
</dbReference>
<dbReference type="HAMAP" id="MF_00445">
    <property type="entry name" value="NDH1_NuoN_1"/>
    <property type="match status" value="1"/>
</dbReference>
<dbReference type="InterPro" id="IPR010096">
    <property type="entry name" value="NADH-Q_OxRdtase_suN/2"/>
</dbReference>
<dbReference type="InterPro" id="IPR001750">
    <property type="entry name" value="ND/Mrp_TM"/>
</dbReference>
<dbReference type="PANTHER" id="PTHR22773">
    <property type="entry name" value="NADH DEHYDROGENASE"/>
    <property type="match status" value="1"/>
</dbReference>
<dbReference type="Pfam" id="PF00361">
    <property type="entry name" value="Proton_antipo_M"/>
    <property type="match status" value="1"/>
</dbReference>